<comment type="similarity">
    <text evidence="1">Belongs to the bacterial ribosomal protein bL27 family.</text>
</comment>
<organism>
    <name type="scientific">Brucella abortus biovar 1 (strain 9-941)</name>
    <dbReference type="NCBI Taxonomy" id="262698"/>
    <lineage>
        <taxon>Bacteria</taxon>
        <taxon>Pseudomonadati</taxon>
        <taxon>Pseudomonadota</taxon>
        <taxon>Alphaproteobacteria</taxon>
        <taxon>Hyphomicrobiales</taxon>
        <taxon>Brucellaceae</taxon>
        <taxon>Brucella/Ochrobactrum group</taxon>
        <taxon>Brucella</taxon>
    </lineage>
</organism>
<keyword id="KW-0687">Ribonucleoprotein</keyword>
<keyword id="KW-0689">Ribosomal protein</keyword>
<proteinExistence type="inferred from homology"/>
<protein>
    <recommendedName>
        <fullName evidence="1">Large ribosomal subunit protein bL27</fullName>
    </recommendedName>
    <alternativeName>
        <fullName evidence="3">50S ribosomal protein L27</fullName>
    </alternativeName>
</protein>
<accession>Q8VW58</accession>
<accession>Q57B41</accession>
<evidence type="ECO:0000255" key="1">
    <source>
        <dbReference type="HAMAP-Rule" id="MF_00539"/>
    </source>
</evidence>
<evidence type="ECO:0000256" key="2">
    <source>
        <dbReference type="SAM" id="MobiDB-lite"/>
    </source>
</evidence>
<evidence type="ECO:0000305" key="3"/>
<sequence>MAHKKAGGSSRNGRDSESKRLGVKKFGGEAVLAGNIIVRQRGTKWHPGANVGLGKDHTIFATVNGSVSFRTKANGRTYVSVNPIAEAAE</sequence>
<feature type="chain" id="PRO_0000181056" description="Large ribosomal subunit protein bL27">
    <location>
        <begin position="1"/>
        <end position="89"/>
    </location>
</feature>
<feature type="region of interest" description="Disordered" evidence="2">
    <location>
        <begin position="1"/>
        <end position="22"/>
    </location>
</feature>
<gene>
    <name evidence="1" type="primary">rpmA</name>
    <name type="synonym">rl27</name>
    <name type="ordered locus">BruAb1_1828</name>
</gene>
<reference key="1">
    <citation type="journal article" date="2002" name="Biochim. Biophys. Acta">
        <title>Evidence for lateral transfer to Brucellae: characterization of a locus with a Tn-like element (Tn2020).</title>
        <authorList>
            <person name="Halling S.M."/>
            <person name="Zuerner R.L."/>
        </authorList>
    </citation>
    <scope>NUCLEOTIDE SEQUENCE [GENOMIC DNA]</scope>
</reference>
<reference key="2">
    <citation type="journal article" date="2005" name="J. Bacteriol.">
        <title>Completion of the genome sequence of Brucella abortus and comparison to the highly similar genomes of Brucella melitensis and Brucella suis.</title>
        <authorList>
            <person name="Halling S.M."/>
            <person name="Peterson-Burch B.D."/>
            <person name="Bricker B.J."/>
            <person name="Zuerner R.L."/>
            <person name="Qing Z."/>
            <person name="Li L.-L."/>
            <person name="Kapur V."/>
            <person name="Alt D.P."/>
            <person name="Olsen S.C."/>
        </authorList>
    </citation>
    <scope>NUCLEOTIDE SEQUENCE [LARGE SCALE GENOMIC DNA]</scope>
    <source>
        <strain>9-941</strain>
    </source>
</reference>
<name>RL27_BRUAB</name>
<dbReference type="EMBL" id="AF119331">
    <property type="protein sequence ID" value="AAL32286.1"/>
    <property type="molecule type" value="Genomic_DNA"/>
</dbReference>
<dbReference type="EMBL" id="AE017223">
    <property type="protein sequence ID" value="AAX75143.1"/>
    <property type="molecule type" value="Genomic_DNA"/>
</dbReference>
<dbReference type="RefSeq" id="WP_002964927.1">
    <property type="nucleotide sequence ID" value="NC_006932.1"/>
</dbReference>
<dbReference type="SMR" id="Q8VW58"/>
<dbReference type="EnsemblBacteria" id="AAX75143">
    <property type="protein sequence ID" value="AAX75143"/>
    <property type="gene ID" value="BruAb1_1828"/>
</dbReference>
<dbReference type="GeneID" id="93017814"/>
<dbReference type="KEGG" id="bmb:BruAb1_1828"/>
<dbReference type="HOGENOM" id="CLU_095424_4_1_5"/>
<dbReference type="Proteomes" id="UP000000540">
    <property type="component" value="Chromosome I"/>
</dbReference>
<dbReference type="GO" id="GO:0022625">
    <property type="term" value="C:cytosolic large ribosomal subunit"/>
    <property type="evidence" value="ECO:0007669"/>
    <property type="project" value="TreeGrafter"/>
</dbReference>
<dbReference type="GO" id="GO:0003735">
    <property type="term" value="F:structural constituent of ribosome"/>
    <property type="evidence" value="ECO:0007669"/>
    <property type="project" value="InterPro"/>
</dbReference>
<dbReference type="GO" id="GO:0006412">
    <property type="term" value="P:translation"/>
    <property type="evidence" value="ECO:0007669"/>
    <property type="project" value="UniProtKB-UniRule"/>
</dbReference>
<dbReference type="FunFam" id="2.40.50.100:FF:000020">
    <property type="entry name" value="50S ribosomal protein L27"/>
    <property type="match status" value="1"/>
</dbReference>
<dbReference type="Gene3D" id="2.40.50.100">
    <property type="match status" value="1"/>
</dbReference>
<dbReference type="HAMAP" id="MF_00539">
    <property type="entry name" value="Ribosomal_bL27"/>
    <property type="match status" value="1"/>
</dbReference>
<dbReference type="InterPro" id="IPR001684">
    <property type="entry name" value="Ribosomal_bL27"/>
</dbReference>
<dbReference type="InterPro" id="IPR018261">
    <property type="entry name" value="Ribosomal_bL27_CS"/>
</dbReference>
<dbReference type="NCBIfam" id="TIGR00062">
    <property type="entry name" value="L27"/>
    <property type="match status" value="1"/>
</dbReference>
<dbReference type="PANTHER" id="PTHR15893:SF0">
    <property type="entry name" value="LARGE RIBOSOMAL SUBUNIT PROTEIN BL27M"/>
    <property type="match status" value="1"/>
</dbReference>
<dbReference type="PANTHER" id="PTHR15893">
    <property type="entry name" value="RIBOSOMAL PROTEIN L27"/>
    <property type="match status" value="1"/>
</dbReference>
<dbReference type="Pfam" id="PF01016">
    <property type="entry name" value="Ribosomal_L27"/>
    <property type="match status" value="1"/>
</dbReference>
<dbReference type="PRINTS" id="PR00063">
    <property type="entry name" value="RIBOSOMALL27"/>
</dbReference>
<dbReference type="SUPFAM" id="SSF110324">
    <property type="entry name" value="Ribosomal L27 protein-like"/>
    <property type="match status" value="1"/>
</dbReference>
<dbReference type="PROSITE" id="PS00831">
    <property type="entry name" value="RIBOSOMAL_L27"/>
    <property type="match status" value="1"/>
</dbReference>